<evidence type="ECO:0000255" key="1">
    <source>
        <dbReference type="HAMAP-Rule" id="MF_00391"/>
    </source>
</evidence>
<evidence type="ECO:0000305" key="2"/>
<organism>
    <name type="scientific">Haemophilus influenzae (strain PittGG)</name>
    <dbReference type="NCBI Taxonomy" id="374931"/>
    <lineage>
        <taxon>Bacteria</taxon>
        <taxon>Pseudomonadati</taxon>
        <taxon>Pseudomonadota</taxon>
        <taxon>Gammaproteobacteria</taxon>
        <taxon>Pasteurellales</taxon>
        <taxon>Pasteurellaceae</taxon>
        <taxon>Haemophilus</taxon>
    </lineage>
</organism>
<sequence>MKRTFQPSVLKRSRTHGFRARMATKNGRQVLARRRAKGRKSLSA</sequence>
<accession>A5UID2</accession>
<protein>
    <recommendedName>
        <fullName evidence="1">Large ribosomal subunit protein bL34</fullName>
    </recommendedName>
    <alternativeName>
        <fullName evidence="2">50S ribosomal protein L34</fullName>
    </alternativeName>
</protein>
<gene>
    <name evidence="1" type="primary">rpmH</name>
    <name type="ordered locus">CGSHiGG_08590</name>
</gene>
<name>RL34_HAEIG</name>
<reference key="1">
    <citation type="journal article" date="2007" name="Genome Biol.">
        <title>Characterization and modeling of the Haemophilus influenzae core and supragenomes based on the complete genomic sequences of Rd and 12 clinical nontypeable strains.</title>
        <authorList>
            <person name="Hogg J.S."/>
            <person name="Hu F.Z."/>
            <person name="Janto B."/>
            <person name="Boissy R."/>
            <person name="Hayes J."/>
            <person name="Keefe R."/>
            <person name="Post J.C."/>
            <person name="Ehrlich G.D."/>
        </authorList>
    </citation>
    <scope>NUCLEOTIDE SEQUENCE [LARGE SCALE GENOMIC DNA]</scope>
    <source>
        <strain>PittGG</strain>
    </source>
</reference>
<proteinExistence type="inferred from homology"/>
<comment type="similarity">
    <text evidence="1">Belongs to the bacterial ribosomal protein bL34 family.</text>
</comment>
<dbReference type="EMBL" id="CP000672">
    <property type="protein sequence ID" value="ABR00538.1"/>
    <property type="molecule type" value="Genomic_DNA"/>
</dbReference>
<dbReference type="SMR" id="A5UID2"/>
<dbReference type="KEGG" id="hiq:CGSHiGG_08590"/>
<dbReference type="HOGENOM" id="CLU_129938_2_0_6"/>
<dbReference type="Proteomes" id="UP000001990">
    <property type="component" value="Chromosome"/>
</dbReference>
<dbReference type="GO" id="GO:1990904">
    <property type="term" value="C:ribonucleoprotein complex"/>
    <property type="evidence" value="ECO:0007669"/>
    <property type="project" value="UniProtKB-KW"/>
</dbReference>
<dbReference type="GO" id="GO:0005840">
    <property type="term" value="C:ribosome"/>
    <property type="evidence" value="ECO:0007669"/>
    <property type="project" value="UniProtKB-KW"/>
</dbReference>
<dbReference type="GO" id="GO:0003735">
    <property type="term" value="F:structural constituent of ribosome"/>
    <property type="evidence" value="ECO:0007669"/>
    <property type="project" value="InterPro"/>
</dbReference>
<dbReference type="GO" id="GO:0006412">
    <property type="term" value="P:translation"/>
    <property type="evidence" value="ECO:0007669"/>
    <property type="project" value="UniProtKB-UniRule"/>
</dbReference>
<dbReference type="FunFam" id="1.10.287.3980:FF:000001">
    <property type="entry name" value="Mitochondrial ribosomal protein L34"/>
    <property type="match status" value="1"/>
</dbReference>
<dbReference type="Gene3D" id="1.10.287.3980">
    <property type="match status" value="1"/>
</dbReference>
<dbReference type="HAMAP" id="MF_00391">
    <property type="entry name" value="Ribosomal_bL34"/>
    <property type="match status" value="1"/>
</dbReference>
<dbReference type="InterPro" id="IPR000271">
    <property type="entry name" value="Ribosomal_bL34"/>
</dbReference>
<dbReference type="InterPro" id="IPR020939">
    <property type="entry name" value="Ribosomal_bL34_CS"/>
</dbReference>
<dbReference type="NCBIfam" id="TIGR01030">
    <property type="entry name" value="rpmH_bact"/>
    <property type="match status" value="1"/>
</dbReference>
<dbReference type="PANTHER" id="PTHR14503:SF4">
    <property type="entry name" value="LARGE RIBOSOMAL SUBUNIT PROTEIN BL34M"/>
    <property type="match status" value="1"/>
</dbReference>
<dbReference type="PANTHER" id="PTHR14503">
    <property type="entry name" value="MITOCHONDRIAL RIBOSOMAL PROTEIN 34 FAMILY MEMBER"/>
    <property type="match status" value="1"/>
</dbReference>
<dbReference type="Pfam" id="PF00468">
    <property type="entry name" value="Ribosomal_L34"/>
    <property type="match status" value="1"/>
</dbReference>
<dbReference type="PROSITE" id="PS00784">
    <property type="entry name" value="RIBOSOMAL_L34"/>
    <property type="match status" value="1"/>
</dbReference>
<keyword id="KW-0687">Ribonucleoprotein</keyword>
<keyword id="KW-0689">Ribosomal protein</keyword>
<feature type="chain" id="PRO_1000013350" description="Large ribosomal subunit protein bL34">
    <location>
        <begin position="1"/>
        <end position="44"/>
    </location>
</feature>